<gene>
    <name evidence="1" type="primary">lysS</name>
    <name type="ordered locus">CTC_00211</name>
</gene>
<reference key="1">
    <citation type="journal article" date="2003" name="Proc. Natl. Acad. Sci. U.S.A.">
        <title>The genome sequence of Clostridium tetani, the causative agent of tetanus disease.</title>
        <authorList>
            <person name="Brueggemann H."/>
            <person name="Baeumer S."/>
            <person name="Fricke W.F."/>
            <person name="Wiezer A."/>
            <person name="Liesegang H."/>
            <person name="Decker I."/>
            <person name="Herzberg C."/>
            <person name="Martinez-Arias R."/>
            <person name="Merkl R."/>
            <person name="Henne A."/>
            <person name="Gottschalk G."/>
        </authorList>
    </citation>
    <scope>NUCLEOTIDE SEQUENCE [LARGE SCALE GENOMIC DNA]</scope>
    <source>
        <strain>Massachusetts / E88</strain>
    </source>
</reference>
<proteinExistence type="inferred from homology"/>
<organism>
    <name type="scientific">Clostridium tetani (strain Massachusetts / E88)</name>
    <dbReference type="NCBI Taxonomy" id="212717"/>
    <lineage>
        <taxon>Bacteria</taxon>
        <taxon>Bacillati</taxon>
        <taxon>Bacillota</taxon>
        <taxon>Clostridia</taxon>
        <taxon>Eubacteriales</taxon>
        <taxon>Clostridiaceae</taxon>
        <taxon>Clostridium</taxon>
    </lineage>
</organism>
<name>SYK_CLOTE</name>
<evidence type="ECO:0000255" key="1">
    <source>
        <dbReference type="HAMAP-Rule" id="MF_00252"/>
    </source>
</evidence>
<accession>Q899G7</accession>
<comment type="catalytic activity">
    <reaction evidence="1">
        <text>tRNA(Lys) + L-lysine + ATP = L-lysyl-tRNA(Lys) + AMP + diphosphate</text>
        <dbReference type="Rhea" id="RHEA:20792"/>
        <dbReference type="Rhea" id="RHEA-COMP:9696"/>
        <dbReference type="Rhea" id="RHEA-COMP:9697"/>
        <dbReference type="ChEBI" id="CHEBI:30616"/>
        <dbReference type="ChEBI" id="CHEBI:32551"/>
        <dbReference type="ChEBI" id="CHEBI:33019"/>
        <dbReference type="ChEBI" id="CHEBI:78442"/>
        <dbReference type="ChEBI" id="CHEBI:78529"/>
        <dbReference type="ChEBI" id="CHEBI:456215"/>
        <dbReference type="EC" id="6.1.1.6"/>
    </reaction>
</comment>
<comment type="cofactor">
    <cofactor evidence="1">
        <name>Mg(2+)</name>
        <dbReference type="ChEBI" id="CHEBI:18420"/>
    </cofactor>
    <text evidence="1">Binds 3 Mg(2+) ions per subunit.</text>
</comment>
<comment type="subunit">
    <text evidence="1">Homodimer.</text>
</comment>
<comment type="subcellular location">
    <subcellularLocation>
        <location evidence="1">Cytoplasm</location>
    </subcellularLocation>
</comment>
<comment type="similarity">
    <text evidence="1">Belongs to the class-II aminoacyl-tRNA synthetase family.</text>
</comment>
<dbReference type="EC" id="6.1.1.6" evidence="1"/>
<dbReference type="EMBL" id="AE015927">
    <property type="protein sequence ID" value="AAO34859.1"/>
    <property type="molecule type" value="Genomic_DNA"/>
</dbReference>
<dbReference type="RefSeq" id="WP_011098529.1">
    <property type="nucleotide sequence ID" value="NC_004557.1"/>
</dbReference>
<dbReference type="SMR" id="Q899G7"/>
<dbReference type="STRING" id="212717.CTC_00211"/>
<dbReference type="GeneID" id="24253741"/>
<dbReference type="KEGG" id="ctc:CTC_00211"/>
<dbReference type="HOGENOM" id="CLU_008255_6_0_9"/>
<dbReference type="OrthoDB" id="9801152at2"/>
<dbReference type="Proteomes" id="UP000001412">
    <property type="component" value="Chromosome"/>
</dbReference>
<dbReference type="GO" id="GO:0005829">
    <property type="term" value="C:cytosol"/>
    <property type="evidence" value="ECO:0007669"/>
    <property type="project" value="TreeGrafter"/>
</dbReference>
<dbReference type="GO" id="GO:0005524">
    <property type="term" value="F:ATP binding"/>
    <property type="evidence" value="ECO:0007669"/>
    <property type="project" value="UniProtKB-UniRule"/>
</dbReference>
<dbReference type="GO" id="GO:0140096">
    <property type="term" value="F:catalytic activity, acting on a protein"/>
    <property type="evidence" value="ECO:0007669"/>
    <property type="project" value="UniProtKB-ARBA"/>
</dbReference>
<dbReference type="GO" id="GO:0004824">
    <property type="term" value="F:lysine-tRNA ligase activity"/>
    <property type="evidence" value="ECO:0007669"/>
    <property type="project" value="UniProtKB-UniRule"/>
</dbReference>
<dbReference type="GO" id="GO:0000287">
    <property type="term" value="F:magnesium ion binding"/>
    <property type="evidence" value="ECO:0007669"/>
    <property type="project" value="UniProtKB-UniRule"/>
</dbReference>
<dbReference type="GO" id="GO:0016740">
    <property type="term" value="F:transferase activity"/>
    <property type="evidence" value="ECO:0007669"/>
    <property type="project" value="UniProtKB-ARBA"/>
</dbReference>
<dbReference type="GO" id="GO:0000049">
    <property type="term" value="F:tRNA binding"/>
    <property type="evidence" value="ECO:0007669"/>
    <property type="project" value="TreeGrafter"/>
</dbReference>
<dbReference type="GO" id="GO:0006430">
    <property type="term" value="P:lysyl-tRNA aminoacylation"/>
    <property type="evidence" value="ECO:0007669"/>
    <property type="project" value="UniProtKB-UniRule"/>
</dbReference>
<dbReference type="CDD" id="cd00775">
    <property type="entry name" value="LysRS_core"/>
    <property type="match status" value="1"/>
</dbReference>
<dbReference type="CDD" id="cd04322">
    <property type="entry name" value="LysRS_N"/>
    <property type="match status" value="1"/>
</dbReference>
<dbReference type="FunFam" id="2.40.50.140:FF:000024">
    <property type="entry name" value="Lysine--tRNA ligase"/>
    <property type="match status" value="1"/>
</dbReference>
<dbReference type="FunFam" id="3.30.930.10:FF:000001">
    <property type="entry name" value="Lysine--tRNA ligase"/>
    <property type="match status" value="1"/>
</dbReference>
<dbReference type="Gene3D" id="3.30.930.10">
    <property type="entry name" value="Bira Bifunctional Protein, Domain 2"/>
    <property type="match status" value="1"/>
</dbReference>
<dbReference type="Gene3D" id="2.40.50.140">
    <property type="entry name" value="Nucleic acid-binding proteins"/>
    <property type="match status" value="1"/>
</dbReference>
<dbReference type="HAMAP" id="MF_00252">
    <property type="entry name" value="Lys_tRNA_synth_class2"/>
    <property type="match status" value="1"/>
</dbReference>
<dbReference type="InterPro" id="IPR004364">
    <property type="entry name" value="Aa-tRNA-synt_II"/>
</dbReference>
<dbReference type="InterPro" id="IPR006195">
    <property type="entry name" value="aa-tRNA-synth_II"/>
</dbReference>
<dbReference type="InterPro" id="IPR045864">
    <property type="entry name" value="aa-tRNA-synth_II/BPL/LPL"/>
</dbReference>
<dbReference type="InterPro" id="IPR002313">
    <property type="entry name" value="Lys-tRNA-ligase_II"/>
</dbReference>
<dbReference type="InterPro" id="IPR034762">
    <property type="entry name" value="Lys-tRNA-ligase_II_bac/euk"/>
</dbReference>
<dbReference type="InterPro" id="IPR044136">
    <property type="entry name" value="Lys-tRNA-ligase_II_N"/>
</dbReference>
<dbReference type="InterPro" id="IPR018149">
    <property type="entry name" value="Lys-tRNA-synth_II_C"/>
</dbReference>
<dbReference type="InterPro" id="IPR012340">
    <property type="entry name" value="NA-bd_OB-fold"/>
</dbReference>
<dbReference type="InterPro" id="IPR004365">
    <property type="entry name" value="NA-bd_OB_tRNA"/>
</dbReference>
<dbReference type="NCBIfam" id="TIGR00499">
    <property type="entry name" value="lysS_bact"/>
    <property type="match status" value="1"/>
</dbReference>
<dbReference type="NCBIfam" id="NF001756">
    <property type="entry name" value="PRK00484.1"/>
    <property type="match status" value="1"/>
</dbReference>
<dbReference type="PANTHER" id="PTHR42918:SF15">
    <property type="entry name" value="LYSINE--TRNA LIGASE, CHLOROPLASTIC_MITOCHONDRIAL"/>
    <property type="match status" value="1"/>
</dbReference>
<dbReference type="PANTHER" id="PTHR42918">
    <property type="entry name" value="LYSYL-TRNA SYNTHETASE"/>
    <property type="match status" value="1"/>
</dbReference>
<dbReference type="Pfam" id="PF00152">
    <property type="entry name" value="tRNA-synt_2"/>
    <property type="match status" value="1"/>
</dbReference>
<dbReference type="Pfam" id="PF01336">
    <property type="entry name" value="tRNA_anti-codon"/>
    <property type="match status" value="1"/>
</dbReference>
<dbReference type="PIRSF" id="PIRSF039101">
    <property type="entry name" value="LysRS2"/>
    <property type="match status" value="1"/>
</dbReference>
<dbReference type="PRINTS" id="PR00982">
    <property type="entry name" value="TRNASYNTHLYS"/>
</dbReference>
<dbReference type="SUPFAM" id="SSF55681">
    <property type="entry name" value="Class II aaRS and biotin synthetases"/>
    <property type="match status" value="1"/>
</dbReference>
<dbReference type="SUPFAM" id="SSF50249">
    <property type="entry name" value="Nucleic acid-binding proteins"/>
    <property type="match status" value="1"/>
</dbReference>
<dbReference type="PROSITE" id="PS50862">
    <property type="entry name" value="AA_TRNA_LIGASE_II"/>
    <property type="match status" value="1"/>
</dbReference>
<protein>
    <recommendedName>
        <fullName evidence="1">Lysine--tRNA ligase</fullName>
        <ecNumber evidence="1">6.1.1.6</ecNumber>
    </recommendedName>
    <alternativeName>
        <fullName evidence="1">Lysyl-tRNA synthetase</fullName>
        <shortName evidence="1">LysRS</shortName>
    </alternativeName>
</protein>
<keyword id="KW-0030">Aminoacyl-tRNA synthetase</keyword>
<keyword id="KW-0067">ATP-binding</keyword>
<keyword id="KW-0963">Cytoplasm</keyword>
<keyword id="KW-0436">Ligase</keyword>
<keyword id="KW-0460">Magnesium</keyword>
<keyword id="KW-0479">Metal-binding</keyword>
<keyword id="KW-0547">Nucleotide-binding</keyword>
<keyword id="KW-0648">Protein biosynthesis</keyword>
<keyword id="KW-1185">Reference proteome</keyword>
<sequence length="502" mass="58727">MSNEEKNLMNEEQEFNQLIQERRQKFFDLQAEGKDPFEVTKVERTHTSEEIKSNFEELEDKEVTVAGRLMSKRVHGKAGFSDIHDRYGKIQLYIKINDVGEERLKEYKSFDIGDFVTITGTVFKTRTGEVSIHITDFKLIAKSLKPLPEKWHGLKDPDLRYRQRYVDLIVNEDVRDTFMKRTKIIKYMREFLDAKDYIEVETPVLSPIAGGAAARPFTTHHNALDIDMYLRIATELYLKRLIVGGFEKVYEIGKNFRNEGIDIRHNPEFTMIELYEAYADYNDMMEITENMVAYIAEKVCGNTKVKYEETEIEFRPPWKRITMVDSVKEYSGVDFNEIKTDEEARELVKGKDFELKKKLEDCTKADILNLFFEEYVEKNLIQPTFVCDYPVEISPLSKKKNDNPEYTERFEGFVYGRELCNAYTELNDPIVQKERFIQQLKERELGDDEAFMMDEDFINALEIGMPPTGGLGIGVDRLVMFLTDSHSIRDVILFPTMKPTHN</sequence>
<feature type="chain" id="PRO_0000152619" description="Lysine--tRNA ligase">
    <location>
        <begin position="1"/>
        <end position="502"/>
    </location>
</feature>
<feature type="binding site" evidence="1">
    <location>
        <position position="411"/>
    </location>
    <ligand>
        <name>Mg(2+)</name>
        <dbReference type="ChEBI" id="CHEBI:18420"/>
        <label>1</label>
    </ligand>
</feature>
<feature type="binding site" evidence="1">
    <location>
        <position position="418"/>
    </location>
    <ligand>
        <name>Mg(2+)</name>
        <dbReference type="ChEBI" id="CHEBI:18420"/>
        <label>1</label>
    </ligand>
</feature>
<feature type="binding site" evidence="1">
    <location>
        <position position="418"/>
    </location>
    <ligand>
        <name>Mg(2+)</name>
        <dbReference type="ChEBI" id="CHEBI:18420"/>
        <label>2</label>
    </ligand>
</feature>